<organism>
    <name type="scientific">Citrus leaf blotch virus (isolate Nagami kumquat/France/SRA-153/1984)</name>
    <name type="common">CLBV</name>
    <dbReference type="NCBI Taxonomy" id="686981"/>
    <lineage>
        <taxon>Viruses</taxon>
        <taxon>Riboviria</taxon>
        <taxon>Orthornavirae</taxon>
        <taxon>Kitrinoviricota</taxon>
        <taxon>Alsuviricetes</taxon>
        <taxon>Tymovirales</taxon>
        <taxon>Betaflexiviridae</taxon>
        <taxon>Trivirinae</taxon>
        <taxon>Citrivirus</taxon>
        <taxon>Citrus leaf blotch virus</taxon>
    </lineage>
</organism>
<organismHost>
    <name type="scientific">Citrus</name>
    <dbReference type="NCBI Taxonomy" id="2706"/>
</organismHost>
<feature type="chain" id="PRO_0000401085" description="Capsid protein">
    <location>
        <begin position="1"/>
        <end position="363"/>
    </location>
</feature>
<feature type="region of interest" description="Disordered" evidence="2">
    <location>
        <begin position="122"/>
        <end position="144"/>
    </location>
</feature>
<feature type="coiled-coil region" evidence="1">
    <location>
        <begin position="72"/>
        <end position="111"/>
    </location>
</feature>
<reference key="1">
    <citation type="journal article" date="2001" name="Virology">
        <title>The nucleotide sequence and genomic organization of Citrus leaf blotch virus: candidate type species for a new virus genus.</title>
        <authorList>
            <person name="Vives M.C."/>
            <person name="Galipienso L."/>
            <person name="Navarro L."/>
            <person name="Moreno P."/>
            <person name="Guerri J."/>
        </authorList>
    </citation>
    <scope>NUCLEOTIDE SEQUENCE [GENOMIC RNA]</scope>
</reference>
<comment type="subcellular location">
    <subcellularLocation>
        <location evidence="3">Virion</location>
    </subcellularLocation>
</comment>
<protein>
    <recommendedName>
        <fullName>Capsid protein</fullName>
        <shortName>CP</shortName>
    </recommendedName>
    <alternativeName>
        <fullName>Coat protein</fullName>
    </alternativeName>
</protein>
<gene>
    <name type="ORF">ORF3</name>
</gene>
<proteinExistence type="predicted"/>
<evidence type="ECO:0000255" key="1"/>
<evidence type="ECO:0000256" key="2">
    <source>
        <dbReference type="SAM" id="MobiDB-lite"/>
    </source>
</evidence>
<evidence type="ECO:0000305" key="3"/>
<keyword id="KW-0167">Capsid protein</keyword>
<keyword id="KW-0175">Coiled coil</keyword>
<keyword id="KW-1139">Helical capsid protein</keyword>
<keyword id="KW-1185">Reference proteome</keyword>
<keyword id="KW-0946">Virion</keyword>
<name>CAPSD_CLBVS</name>
<sequence length="363" mass="40680">MKITNDNAATINYWLAIVEPFLTSDEDRNSDDIIRKFRAVVAEHGDTEEVDPEVFFAIFSILATKYGRVYSKKVEELNESLKAAILAGAEAEDLRNKLKDISQRYASQLEITADREQQLESLKKKGHEQPLTGSGSSEPVHAESAHAPQLHVVNDLQQFYIPFNEYPSLTQSIGTSDIANDEHLKRVQLTLKITDTKVFSRTGFEFAISCGSRSTSDKDPYDGIIKISGKSHMRKDIAYAIRTSGITVRQFCAAFANLYWNFNLARNTPPENWRKKGFTEGTKFAAFDFFYAVGSNAAIPTEADGSVRLIRPPTNEENEANSAMRYADIYEQNSKTAGHVTSSPLYNRGSSYESKNKAKLLEM</sequence>
<accession>Q91QZ1</accession>
<dbReference type="EMBL" id="AJ318061">
    <property type="protein sequence ID" value="CAC39424.1"/>
    <property type="molecule type" value="Genomic_RNA"/>
</dbReference>
<dbReference type="RefSeq" id="NP_624335.1">
    <property type="nucleotide sequence ID" value="NC_003877.1"/>
</dbReference>
<dbReference type="SMR" id="Q91QZ1"/>
<dbReference type="KEGG" id="vg:944477"/>
<dbReference type="Proteomes" id="UP000006933">
    <property type="component" value="Segment"/>
</dbReference>
<dbReference type="GO" id="GO:0019029">
    <property type="term" value="C:helical viral capsid"/>
    <property type="evidence" value="ECO:0007669"/>
    <property type="project" value="UniProtKB-KW"/>
</dbReference>
<dbReference type="GO" id="GO:0005198">
    <property type="term" value="F:structural molecule activity"/>
    <property type="evidence" value="ECO:0007669"/>
    <property type="project" value="InterPro"/>
</dbReference>
<dbReference type="InterPro" id="IPR000052">
    <property type="entry name" value="Pltvir_coat"/>
</dbReference>
<dbReference type="Pfam" id="PF00286">
    <property type="entry name" value="Flexi_CP"/>
    <property type="match status" value="1"/>
</dbReference>
<dbReference type="PRINTS" id="PR00232">
    <property type="entry name" value="POTXCARLCOAT"/>
</dbReference>
<dbReference type="PROSITE" id="PS00418">
    <property type="entry name" value="POTEX_CARLAVIRUS_COAT"/>
    <property type="match status" value="1"/>
</dbReference>